<sequence length="164" mass="17269">MSKTAQIAVVMGSKSDWATMQEATQILDELNVPYHVEVVSAHRTPDKLFEFAENAQKNGYKVIIAGAGGAAHLPGMIAAKTLVPVLGVPVKSSMLSGVDSLYSIVQMPKGIPVGTLAIGPAGAANAGLLAAQILAGWDDALFTRLQAFRENQTNMVLDNPDPRT</sequence>
<evidence type="ECO:0000255" key="1">
    <source>
        <dbReference type="HAMAP-Rule" id="MF_01929"/>
    </source>
</evidence>
<evidence type="ECO:0000305" key="2"/>
<comment type="function">
    <text evidence="1">Catalyzes the conversion of N5-carboxyaminoimidazole ribonucleotide (N5-CAIR) to 4-carboxy-5-aminoimidazole ribonucleotide (CAIR).</text>
</comment>
<comment type="catalytic activity">
    <reaction evidence="1">
        <text>5-carboxyamino-1-(5-phospho-D-ribosyl)imidazole + H(+) = 5-amino-1-(5-phospho-D-ribosyl)imidazole-4-carboxylate</text>
        <dbReference type="Rhea" id="RHEA:13193"/>
        <dbReference type="ChEBI" id="CHEBI:15378"/>
        <dbReference type="ChEBI" id="CHEBI:58730"/>
        <dbReference type="ChEBI" id="CHEBI:77657"/>
        <dbReference type="EC" id="5.4.99.18"/>
    </reaction>
</comment>
<comment type="pathway">
    <text evidence="1">Purine metabolism; IMP biosynthesis via de novo pathway; 5-amino-1-(5-phospho-D-ribosyl)imidazole-4-carboxylate from 5-amino-1-(5-phospho-D-ribosyl)imidazole (N5-CAIR route): step 2/2.</text>
</comment>
<comment type="similarity">
    <text evidence="1">Belongs to the AIR carboxylase family. Class I subfamily.</text>
</comment>
<feature type="chain" id="PRO_0000074975" description="N5-carboxyaminoimidazole ribonucleotide mutase">
    <location>
        <begin position="1"/>
        <end position="164"/>
    </location>
</feature>
<feature type="binding site" evidence="1">
    <location>
        <position position="13"/>
    </location>
    <ligand>
        <name>substrate</name>
    </ligand>
</feature>
<feature type="binding site" evidence="1">
    <location>
        <position position="16"/>
    </location>
    <ligand>
        <name>substrate</name>
    </ligand>
</feature>
<feature type="binding site" evidence="1">
    <location>
        <position position="43"/>
    </location>
    <ligand>
        <name>substrate</name>
    </ligand>
</feature>
<feature type="sequence conflict" description="In Ref. 2; CAA83909." evidence="2" ref="2">
    <original>DALFT</original>
    <variation>AELLS</variation>
    <location>
        <begin position="139"/>
        <end position="143"/>
    </location>
</feature>
<feature type="sequence conflict" description="In Ref. 2; CAA83909." evidence="2" ref="2">
    <original>A</original>
    <variation>S</variation>
    <location>
        <position position="147"/>
    </location>
</feature>
<feature type="sequence conflict" description="In Ref. 2; CAA83909." evidence="2" ref="2">
    <original>N</original>
    <variation>S</variation>
    <location>
        <position position="151"/>
    </location>
</feature>
<feature type="sequence conflict" description="In Ref. 2; CAA83909." evidence="2" ref="2">
    <original>NM</original>
    <variation>RA</variation>
    <location>
        <begin position="154"/>
        <end position="155"/>
    </location>
</feature>
<organism>
    <name type="scientific">Haemophilus influenzae (strain ATCC 51907 / DSM 11121 / KW20 / Rd)</name>
    <dbReference type="NCBI Taxonomy" id="71421"/>
    <lineage>
        <taxon>Bacteria</taxon>
        <taxon>Pseudomonadati</taxon>
        <taxon>Pseudomonadota</taxon>
        <taxon>Gammaproteobacteria</taxon>
        <taxon>Pasteurellales</taxon>
        <taxon>Pasteurellaceae</taxon>
        <taxon>Haemophilus</taxon>
    </lineage>
</organism>
<accession>P43849</accession>
<reference key="1">
    <citation type="journal article" date="1995" name="Science">
        <title>Whole-genome random sequencing and assembly of Haemophilus influenzae Rd.</title>
        <authorList>
            <person name="Fleischmann R.D."/>
            <person name="Adams M.D."/>
            <person name="White O."/>
            <person name="Clayton R.A."/>
            <person name="Kirkness E.F."/>
            <person name="Kerlavage A.R."/>
            <person name="Bult C.J."/>
            <person name="Tomb J.-F."/>
            <person name="Dougherty B.A."/>
            <person name="Merrick J.M."/>
            <person name="McKenney K."/>
            <person name="Sutton G.G."/>
            <person name="FitzHugh W."/>
            <person name="Fields C.A."/>
            <person name="Gocayne J.D."/>
            <person name="Scott J.D."/>
            <person name="Shirley R."/>
            <person name="Liu L.-I."/>
            <person name="Glodek A."/>
            <person name="Kelley J.M."/>
            <person name="Weidman J.F."/>
            <person name="Phillips C.A."/>
            <person name="Spriggs T."/>
            <person name="Hedblom E."/>
            <person name="Cotton M.D."/>
            <person name="Utterback T.R."/>
            <person name="Hanna M.C."/>
            <person name="Nguyen D.T."/>
            <person name="Saudek D.M."/>
            <person name="Brandon R.C."/>
            <person name="Fine L.D."/>
            <person name="Fritchman J.L."/>
            <person name="Fuhrmann J.L."/>
            <person name="Geoghagen N.S.M."/>
            <person name="Gnehm C.L."/>
            <person name="McDonald L.A."/>
            <person name="Small K.V."/>
            <person name="Fraser C.M."/>
            <person name="Smith H.O."/>
            <person name="Venter J.C."/>
        </authorList>
    </citation>
    <scope>NUCLEOTIDE SEQUENCE [LARGE SCALE GENOMIC DNA]</scope>
    <source>
        <strain>ATCC 51907 / DSM 11121 / KW20 / Rd</strain>
    </source>
</reference>
<reference key="2">
    <citation type="journal article" date="1994" name="Mol. Microbiol.">
        <title>The fimbrial gene cluster of Haemophilus influenzae type b.</title>
        <authorList>
            <person name="van Ham M.S."/>
            <person name="van Alphen L."/>
            <person name="Mooi F.R."/>
            <person name="van Putten J.P.M."/>
        </authorList>
    </citation>
    <scope>NUCLEOTIDE SEQUENCE [GENOMIC DNA] OF 1-161</scope>
    <source>
        <strain>AM30 (770235) / Serotype B</strain>
    </source>
</reference>
<proteinExistence type="inferred from homology"/>
<gene>
    <name evidence="1" type="primary">purE</name>
    <name type="ordered locus">HI_1615</name>
</gene>
<name>PURE_HAEIN</name>
<dbReference type="EC" id="5.4.99.18" evidence="1"/>
<dbReference type="EMBL" id="L42023">
    <property type="protein sequence ID" value="AAC23263.1"/>
    <property type="molecule type" value="Genomic_DNA"/>
</dbReference>
<dbReference type="EMBL" id="Z33502">
    <property type="protein sequence ID" value="CAA83909.1"/>
    <property type="molecule type" value="Genomic_DNA"/>
</dbReference>
<dbReference type="PIR" id="G64132">
    <property type="entry name" value="G64132"/>
</dbReference>
<dbReference type="PIR" id="S54434">
    <property type="entry name" value="S54434"/>
</dbReference>
<dbReference type="RefSeq" id="NP_439757.1">
    <property type="nucleotide sequence ID" value="NC_000907.1"/>
</dbReference>
<dbReference type="SMR" id="P43849"/>
<dbReference type="STRING" id="71421.HI_1615"/>
<dbReference type="EnsemblBacteria" id="AAC23263">
    <property type="protein sequence ID" value="AAC23263"/>
    <property type="gene ID" value="HI_1615"/>
</dbReference>
<dbReference type="KEGG" id="hin:HI_1615"/>
<dbReference type="PATRIC" id="fig|71421.8.peg.1688"/>
<dbReference type="eggNOG" id="COG0041">
    <property type="taxonomic scope" value="Bacteria"/>
</dbReference>
<dbReference type="HOGENOM" id="CLU_094982_2_2_6"/>
<dbReference type="OrthoDB" id="9791908at2"/>
<dbReference type="PhylomeDB" id="P43849"/>
<dbReference type="BioCyc" id="HINF71421:G1GJ1-1628-MONOMER"/>
<dbReference type="UniPathway" id="UPA00074">
    <property type="reaction ID" value="UER00943"/>
</dbReference>
<dbReference type="Proteomes" id="UP000000579">
    <property type="component" value="Chromosome"/>
</dbReference>
<dbReference type="GO" id="GO:0034023">
    <property type="term" value="F:5-(carboxyamino)imidazole ribonucleotide mutase activity"/>
    <property type="evidence" value="ECO:0007669"/>
    <property type="project" value="UniProtKB-UniRule"/>
</dbReference>
<dbReference type="GO" id="GO:0006189">
    <property type="term" value="P:'de novo' IMP biosynthetic process"/>
    <property type="evidence" value="ECO:0007669"/>
    <property type="project" value="UniProtKB-UniRule"/>
</dbReference>
<dbReference type="FunFam" id="3.40.50.1970:FF:000004">
    <property type="entry name" value="N5-carboxyaminoimidazole ribonucleotide mutase"/>
    <property type="match status" value="1"/>
</dbReference>
<dbReference type="Gene3D" id="3.40.50.1970">
    <property type="match status" value="1"/>
</dbReference>
<dbReference type="HAMAP" id="MF_01929">
    <property type="entry name" value="PurE_classI"/>
    <property type="match status" value="1"/>
</dbReference>
<dbReference type="InterPro" id="IPR033747">
    <property type="entry name" value="PurE_ClassI"/>
</dbReference>
<dbReference type="InterPro" id="IPR000031">
    <property type="entry name" value="PurE_dom"/>
</dbReference>
<dbReference type="InterPro" id="IPR024694">
    <property type="entry name" value="PurE_prokaryotes"/>
</dbReference>
<dbReference type="NCBIfam" id="TIGR01162">
    <property type="entry name" value="purE"/>
    <property type="match status" value="1"/>
</dbReference>
<dbReference type="PANTHER" id="PTHR23046:SF2">
    <property type="entry name" value="PHOSPHORIBOSYLAMINOIMIDAZOLE CARBOXYLASE"/>
    <property type="match status" value="1"/>
</dbReference>
<dbReference type="PANTHER" id="PTHR23046">
    <property type="entry name" value="PHOSPHORIBOSYLAMINOIMIDAZOLE CARBOXYLASE CATALYTIC SUBUNIT"/>
    <property type="match status" value="1"/>
</dbReference>
<dbReference type="Pfam" id="PF00731">
    <property type="entry name" value="AIRC"/>
    <property type="match status" value="1"/>
</dbReference>
<dbReference type="PIRSF" id="PIRSF001338">
    <property type="entry name" value="AIR_carboxylase"/>
    <property type="match status" value="1"/>
</dbReference>
<dbReference type="SMART" id="SM01001">
    <property type="entry name" value="AIRC"/>
    <property type="match status" value="1"/>
</dbReference>
<dbReference type="SUPFAM" id="SSF52255">
    <property type="entry name" value="N5-CAIR mutase (phosphoribosylaminoimidazole carboxylase, PurE)"/>
    <property type="match status" value="1"/>
</dbReference>
<keyword id="KW-0413">Isomerase</keyword>
<keyword id="KW-0658">Purine biosynthesis</keyword>
<keyword id="KW-1185">Reference proteome</keyword>
<protein>
    <recommendedName>
        <fullName evidence="1">N5-carboxyaminoimidazole ribonucleotide mutase</fullName>
        <shortName evidence="1">N5-CAIR mutase</shortName>
        <ecNumber evidence="1">5.4.99.18</ecNumber>
    </recommendedName>
    <alternativeName>
        <fullName evidence="1">5-(carboxyamino)imidazole ribonucleotide mutase</fullName>
    </alternativeName>
</protein>